<organism>
    <name type="scientific">Salmonella enteritidis PT4 (strain P125109)</name>
    <dbReference type="NCBI Taxonomy" id="550537"/>
    <lineage>
        <taxon>Bacteria</taxon>
        <taxon>Pseudomonadati</taxon>
        <taxon>Pseudomonadota</taxon>
        <taxon>Gammaproteobacteria</taxon>
        <taxon>Enterobacterales</taxon>
        <taxon>Enterobacteriaceae</taxon>
        <taxon>Salmonella</taxon>
    </lineage>
</organism>
<evidence type="ECO:0000255" key="1">
    <source>
        <dbReference type="HAMAP-Rule" id="MF_00709"/>
    </source>
</evidence>
<reference key="1">
    <citation type="journal article" date="2008" name="Genome Res.">
        <title>Comparative genome analysis of Salmonella enteritidis PT4 and Salmonella gallinarum 287/91 provides insights into evolutionary and host adaptation pathways.</title>
        <authorList>
            <person name="Thomson N.R."/>
            <person name="Clayton D.J."/>
            <person name="Windhorst D."/>
            <person name="Vernikos G."/>
            <person name="Davidson S."/>
            <person name="Churcher C."/>
            <person name="Quail M.A."/>
            <person name="Stevens M."/>
            <person name="Jones M.A."/>
            <person name="Watson M."/>
            <person name="Barron A."/>
            <person name="Layton A."/>
            <person name="Pickard D."/>
            <person name="Kingsley R.A."/>
            <person name="Bignell A."/>
            <person name="Clark L."/>
            <person name="Harris B."/>
            <person name="Ormond D."/>
            <person name="Abdellah Z."/>
            <person name="Brooks K."/>
            <person name="Cherevach I."/>
            <person name="Chillingworth T."/>
            <person name="Woodward J."/>
            <person name="Norberczak H."/>
            <person name="Lord A."/>
            <person name="Arrowsmith C."/>
            <person name="Jagels K."/>
            <person name="Moule S."/>
            <person name="Mungall K."/>
            <person name="Saunders M."/>
            <person name="Whitehead S."/>
            <person name="Chabalgoity J.A."/>
            <person name="Maskell D."/>
            <person name="Humphreys T."/>
            <person name="Roberts M."/>
            <person name="Barrow P.A."/>
            <person name="Dougan G."/>
            <person name="Parkhill J."/>
        </authorList>
    </citation>
    <scope>NUCLEOTIDE SEQUENCE [LARGE SCALE GENOMIC DNA]</scope>
    <source>
        <strain>P125109</strain>
    </source>
</reference>
<feature type="chain" id="PRO_1000132410" description="Fumarate reductase subunit D">
    <location>
        <begin position="1"/>
        <end position="119"/>
    </location>
</feature>
<feature type="transmembrane region" description="Helical" evidence="1">
    <location>
        <begin position="25"/>
        <end position="45"/>
    </location>
</feature>
<feature type="transmembrane region" description="Helical" evidence="1">
    <location>
        <begin position="61"/>
        <end position="81"/>
    </location>
</feature>
<feature type="transmembrane region" description="Helical" evidence="1">
    <location>
        <begin position="99"/>
        <end position="119"/>
    </location>
</feature>
<proteinExistence type="inferred from homology"/>
<keyword id="KW-0997">Cell inner membrane</keyword>
<keyword id="KW-1003">Cell membrane</keyword>
<keyword id="KW-0472">Membrane</keyword>
<keyword id="KW-0812">Transmembrane</keyword>
<keyword id="KW-1133">Transmembrane helix</keyword>
<accession>B5R015</accession>
<sequence length="119" mass="13049">MINPNPKRSDEPVFWGLFGAGGMWGAIIAPVIVLLVGIMLPLGLFPGDALSFERVLTFAQSFIGRVFLFLMIVLPLWCGLHRMHHAMHDLKIHVPAGKWVFYGLAAILTVVTAIGVITL</sequence>
<gene>
    <name evidence="1" type="primary">frdD</name>
    <name type="ordered locus">SEN4110</name>
</gene>
<dbReference type="EMBL" id="AM933172">
    <property type="protein sequence ID" value="CAR35670.1"/>
    <property type="molecule type" value="Genomic_DNA"/>
</dbReference>
<dbReference type="RefSeq" id="WP_000609650.1">
    <property type="nucleotide sequence ID" value="NC_011294.1"/>
</dbReference>
<dbReference type="SMR" id="B5R015"/>
<dbReference type="KEGG" id="set:SEN4110"/>
<dbReference type="HOGENOM" id="CLU_168367_0_0_6"/>
<dbReference type="Proteomes" id="UP000000613">
    <property type="component" value="Chromosome"/>
</dbReference>
<dbReference type="GO" id="GO:0045283">
    <property type="term" value="C:fumarate reductase complex"/>
    <property type="evidence" value="ECO:0007669"/>
    <property type="project" value="UniProtKB-UniRule"/>
</dbReference>
<dbReference type="GO" id="GO:0005886">
    <property type="term" value="C:plasma membrane"/>
    <property type="evidence" value="ECO:0007669"/>
    <property type="project" value="UniProtKB-SubCell"/>
</dbReference>
<dbReference type="GO" id="GO:0000104">
    <property type="term" value="F:succinate dehydrogenase activity"/>
    <property type="evidence" value="ECO:0007669"/>
    <property type="project" value="UniProtKB-UniRule"/>
</dbReference>
<dbReference type="GO" id="GO:0006106">
    <property type="term" value="P:fumarate metabolic process"/>
    <property type="evidence" value="ECO:0007669"/>
    <property type="project" value="InterPro"/>
</dbReference>
<dbReference type="CDD" id="cd00547">
    <property type="entry name" value="QFR_TypeD_subunitD"/>
    <property type="match status" value="1"/>
</dbReference>
<dbReference type="FunFam" id="1.20.1300.10:FF:000002">
    <property type="entry name" value="Fumarate reductase subunit D"/>
    <property type="match status" value="1"/>
</dbReference>
<dbReference type="Gene3D" id="1.20.1300.10">
    <property type="entry name" value="Fumarate reductase/succinate dehydrogenase, transmembrane subunit"/>
    <property type="match status" value="1"/>
</dbReference>
<dbReference type="HAMAP" id="MF_00709">
    <property type="entry name" value="Fumarate_red_D"/>
    <property type="match status" value="1"/>
</dbReference>
<dbReference type="InterPro" id="IPR003418">
    <property type="entry name" value="Fumarate_red_D"/>
</dbReference>
<dbReference type="InterPro" id="IPR034804">
    <property type="entry name" value="SQR/QFR_C/D"/>
</dbReference>
<dbReference type="NCBIfam" id="NF003977">
    <property type="entry name" value="PRK05470.1-1"/>
    <property type="match status" value="1"/>
</dbReference>
<dbReference type="Pfam" id="PF02313">
    <property type="entry name" value="Fumarate_red_D"/>
    <property type="match status" value="1"/>
</dbReference>
<dbReference type="PIRSF" id="PIRSF000179">
    <property type="entry name" value="FrdD"/>
    <property type="match status" value="1"/>
</dbReference>
<dbReference type="SUPFAM" id="SSF81343">
    <property type="entry name" value="Fumarate reductase respiratory complex transmembrane subunits"/>
    <property type="match status" value="1"/>
</dbReference>
<name>FRDD_SALEP</name>
<comment type="function">
    <text evidence="1">Two distinct, membrane-bound, FAD-containing enzymes are responsible for the catalysis of fumarate and succinate interconversion; fumarate reductase is used in anaerobic growth, and succinate dehydrogenase is used in aerobic growth. Anchors the catalytic components of the fumarate reductase complex to the cell inner membrane, binds quinones.</text>
</comment>
<comment type="subunit">
    <text evidence="1">Part of an enzyme complex containing four subunits: a flavoprotein (FrdA), an iron-sulfur protein (FrdB), and two hydrophobic anchor proteins (FrdC and FrdD).</text>
</comment>
<comment type="subcellular location">
    <subcellularLocation>
        <location evidence="1">Cell inner membrane</location>
        <topology evidence="1">Multi-pass membrane protein</topology>
    </subcellularLocation>
</comment>
<comment type="similarity">
    <text evidence="1">Belongs to the FrdD family.</text>
</comment>
<protein>
    <recommendedName>
        <fullName evidence="1">Fumarate reductase subunit D</fullName>
    </recommendedName>
    <alternativeName>
        <fullName evidence="1">Fumarate reductase 13 kDa hydrophobic protein</fullName>
    </alternativeName>
    <alternativeName>
        <fullName evidence="1">Quinol-fumarate reductase subunit D</fullName>
        <shortName evidence="1">QFR subunit D</shortName>
    </alternativeName>
</protein>